<name>KPRS_SYNE7</name>
<feature type="chain" id="PRO_0000141216" description="Ribose-phosphate pyrophosphokinase">
    <location>
        <begin position="1"/>
        <end position="331"/>
    </location>
</feature>
<feature type="active site" evidence="1">
    <location>
        <position position="211"/>
    </location>
</feature>
<feature type="binding site" evidence="1">
    <location>
        <begin position="55"/>
        <end position="57"/>
    </location>
    <ligand>
        <name>ATP</name>
        <dbReference type="ChEBI" id="CHEBI:30616"/>
    </ligand>
</feature>
<feature type="binding site" evidence="1">
    <location>
        <position position="148"/>
    </location>
    <ligand>
        <name>Mg(2+)</name>
        <dbReference type="ChEBI" id="CHEBI:18420"/>
        <label>1</label>
    </ligand>
</feature>
<feature type="binding site" evidence="1">
    <location>
        <position position="187"/>
    </location>
    <ligand>
        <name>Mg(2+)</name>
        <dbReference type="ChEBI" id="CHEBI:18420"/>
        <label>2</label>
    </ligand>
</feature>
<feature type="binding site" evidence="1">
    <location>
        <position position="213"/>
    </location>
    <ligand>
        <name>D-ribose 5-phosphate</name>
        <dbReference type="ChEBI" id="CHEBI:78346"/>
    </ligand>
</feature>
<feature type="binding site" evidence="1">
    <location>
        <position position="237"/>
    </location>
    <ligand>
        <name>D-ribose 5-phosphate</name>
        <dbReference type="ChEBI" id="CHEBI:78346"/>
    </ligand>
</feature>
<feature type="binding site" evidence="1">
    <location>
        <begin position="241"/>
        <end position="245"/>
    </location>
    <ligand>
        <name>D-ribose 5-phosphate</name>
        <dbReference type="ChEBI" id="CHEBI:78346"/>
    </ligand>
</feature>
<accession>Q59988</accession>
<accession>Q31LC6</accession>
<keyword id="KW-0067">ATP-binding</keyword>
<keyword id="KW-0963">Cytoplasm</keyword>
<keyword id="KW-0418">Kinase</keyword>
<keyword id="KW-0460">Magnesium</keyword>
<keyword id="KW-0479">Metal-binding</keyword>
<keyword id="KW-0545">Nucleotide biosynthesis</keyword>
<keyword id="KW-0547">Nucleotide-binding</keyword>
<keyword id="KW-1185">Reference proteome</keyword>
<keyword id="KW-0808">Transferase</keyword>
<reference key="1">
    <citation type="journal article" date="1993" name="Biosci. Biotechnol. Biochem.">
        <title>A cyanobacterial gene encoding a protein with extensive homology to mammalian phosphoribosylpyrophosphate synthetase.</title>
        <authorList>
            <person name="Nagaya M."/>
            <person name="Aiba H."/>
            <person name="Mizuno T."/>
        </authorList>
    </citation>
    <scope>NUCLEOTIDE SEQUENCE [GENOMIC DNA]</scope>
</reference>
<reference key="2">
    <citation type="submission" date="2005-08" db="EMBL/GenBank/DDBJ databases">
        <title>Complete sequence of chromosome 1 of Synechococcus elongatus PCC 7942.</title>
        <authorList>
            <consortium name="US DOE Joint Genome Institute"/>
            <person name="Copeland A."/>
            <person name="Lucas S."/>
            <person name="Lapidus A."/>
            <person name="Barry K."/>
            <person name="Detter J.C."/>
            <person name="Glavina T."/>
            <person name="Hammon N."/>
            <person name="Israni S."/>
            <person name="Pitluck S."/>
            <person name="Schmutz J."/>
            <person name="Larimer F."/>
            <person name="Land M."/>
            <person name="Kyrpides N."/>
            <person name="Lykidis A."/>
            <person name="Golden S."/>
            <person name="Richardson P."/>
        </authorList>
    </citation>
    <scope>NUCLEOTIDE SEQUENCE [LARGE SCALE GENOMIC DNA]</scope>
    <source>
        <strain>ATCC 33912 / PCC 7942 / FACHB-805</strain>
    </source>
</reference>
<sequence length="331" mass="36351">MIRSATLPFASALPSLPDNHRLRLFSGSSNSALSQEVSRYLGIDLGPMIRKRFADGELYVQIQESIRGCDVYLMQPTCWPVNDHLMELLIMIDACRRASARQITAVLPYYGYARADRKTAGRESITAKLVANLITQAGANRVLAMDLHSAQIQGYFDIPFDHVYGSPVLIDYLRSKNLADLVVVSPDVGGVARARAFAKKLDDAPLAIIDKRRQAHNVAEVLNVIGDVQGKTAVLVDDMIDTAGTICEGARLLRKQGASQVYACATHAVFSPPAIERLSASGLFEEVIVTNTIPIPEENRFPQLTILSVANLLGETIWRIHEESSVSSMFR</sequence>
<comment type="function">
    <text evidence="1">Involved in the biosynthesis of the central metabolite phospho-alpha-D-ribosyl-1-pyrophosphate (PRPP) via the transfer of pyrophosphoryl group from ATP to 1-hydroxyl of ribose-5-phosphate (Rib-5-P).</text>
</comment>
<comment type="catalytic activity">
    <reaction evidence="1">
        <text>D-ribose 5-phosphate + ATP = 5-phospho-alpha-D-ribose 1-diphosphate + AMP + H(+)</text>
        <dbReference type="Rhea" id="RHEA:15609"/>
        <dbReference type="ChEBI" id="CHEBI:15378"/>
        <dbReference type="ChEBI" id="CHEBI:30616"/>
        <dbReference type="ChEBI" id="CHEBI:58017"/>
        <dbReference type="ChEBI" id="CHEBI:78346"/>
        <dbReference type="ChEBI" id="CHEBI:456215"/>
        <dbReference type="EC" id="2.7.6.1"/>
    </reaction>
</comment>
<comment type="cofactor">
    <cofactor evidence="1">
        <name>Mg(2+)</name>
        <dbReference type="ChEBI" id="CHEBI:18420"/>
    </cofactor>
    <text evidence="1">Binds 2 Mg(2+) ions per subunit.</text>
</comment>
<comment type="pathway">
    <text evidence="1">Metabolic intermediate biosynthesis; 5-phospho-alpha-D-ribose 1-diphosphate biosynthesis; 5-phospho-alpha-D-ribose 1-diphosphate from D-ribose 5-phosphate (route I): step 1/1.</text>
</comment>
<comment type="subunit">
    <text evidence="1">Homohexamer.</text>
</comment>
<comment type="subcellular location">
    <subcellularLocation>
        <location evidence="1">Cytoplasm</location>
    </subcellularLocation>
</comment>
<comment type="similarity">
    <text evidence="1">Belongs to the ribose-phosphate pyrophosphokinase family. Class I subfamily.</text>
</comment>
<dbReference type="EC" id="2.7.6.1" evidence="1"/>
<dbReference type="EMBL" id="D14994">
    <property type="protein sequence ID" value="BAA03638.1"/>
    <property type="molecule type" value="Genomic_DNA"/>
</dbReference>
<dbReference type="EMBL" id="CP000100">
    <property type="protein sequence ID" value="ABB58143.1"/>
    <property type="molecule type" value="Genomic_DNA"/>
</dbReference>
<dbReference type="PIR" id="JN0886">
    <property type="entry name" value="JN0886"/>
</dbReference>
<dbReference type="RefSeq" id="WP_011378321.1">
    <property type="nucleotide sequence ID" value="NZ_JACJTX010000001.1"/>
</dbReference>
<dbReference type="SMR" id="Q59988"/>
<dbReference type="STRING" id="1140.Synpcc7942_2113"/>
<dbReference type="PaxDb" id="1140-Synpcc7942_2113"/>
<dbReference type="KEGG" id="syf:Synpcc7942_2113"/>
<dbReference type="eggNOG" id="COG0462">
    <property type="taxonomic scope" value="Bacteria"/>
</dbReference>
<dbReference type="HOGENOM" id="CLU_033546_7_0_3"/>
<dbReference type="OrthoDB" id="9777067at2"/>
<dbReference type="BioCyc" id="SYNEL:SYNPCC7942_2113-MONOMER"/>
<dbReference type="UniPathway" id="UPA00087">
    <property type="reaction ID" value="UER00172"/>
</dbReference>
<dbReference type="Proteomes" id="UP000889800">
    <property type="component" value="Chromosome"/>
</dbReference>
<dbReference type="GO" id="GO:0005737">
    <property type="term" value="C:cytoplasm"/>
    <property type="evidence" value="ECO:0007669"/>
    <property type="project" value="UniProtKB-SubCell"/>
</dbReference>
<dbReference type="GO" id="GO:0002189">
    <property type="term" value="C:ribose phosphate diphosphokinase complex"/>
    <property type="evidence" value="ECO:0007669"/>
    <property type="project" value="TreeGrafter"/>
</dbReference>
<dbReference type="GO" id="GO:0005524">
    <property type="term" value="F:ATP binding"/>
    <property type="evidence" value="ECO:0007669"/>
    <property type="project" value="UniProtKB-KW"/>
</dbReference>
<dbReference type="GO" id="GO:0016301">
    <property type="term" value="F:kinase activity"/>
    <property type="evidence" value="ECO:0007669"/>
    <property type="project" value="UniProtKB-KW"/>
</dbReference>
<dbReference type="GO" id="GO:0000287">
    <property type="term" value="F:magnesium ion binding"/>
    <property type="evidence" value="ECO:0007669"/>
    <property type="project" value="UniProtKB-UniRule"/>
</dbReference>
<dbReference type="GO" id="GO:0004749">
    <property type="term" value="F:ribose phosphate diphosphokinase activity"/>
    <property type="evidence" value="ECO:0007669"/>
    <property type="project" value="UniProtKB-UniRule"/>
</dbReference>
<dbReference type="GO" id="GO:0006015">
    <property type="term" value="P:5-phosphoribose 1-diphosphate biosynthetic process"/>
    <property type="evidence" value="ECO:0007669"/>
    <property type="project" value="UniProtKB-UniRule"/>
</dbReference>
<dbReference type="GO" id="GO:0006164">
    <property type="term" value="P:purine nucleotide biosynthetic process"/>
    <property type="evidence" value="ECO:0007669"/>
    <property type="project" value="TreeGrafter"/>
</dbReference>
<dbReference type="GO" id="GO:0009156">
    <property type="term" value="P:ribonucleoside monophosphate biosynthetic process"/>
    <property type="evidence" value="ECO:0007669"/>
    <property type="project" value="InterPro"/>
</dbReference>
<dbReference type="CDD" id="cd06223">
    <property type="entry name" value="PRTases_typeI"/>
    <property type="match status" value="1"/>
</dbReference>
<dbReference type="FunFam" id="3.40.50.2020:FF:000002">
    <property type="entry name" value="Ribose-phosphate pyrophosphokinase"/>
    <property type="match status" value="1"/>
</dbReference>
<dbReference type="FunFam" id="3.40.50.2020:FF:000014">
    <property type="entry name" value="Ribose-phosphate pyrophosphokinase 1"/>
    <property type="match status" value="1"/>
</dbReference>
<dbReference type="Gene3D" id="3.40.50.2020">
    <property type="match status" value="2"/>
</dbReference>
<dbReference type="HAMAP" id="MF_00583_B">
    <property type="entry name" value="RibP_PPkinase_B"/>
    <property type="match status" value="1"/>
</dbReference>
<dbReference type="InterPro" id="IPR000842">
    <property type="entry name" value="PRib_PP_synth_CS"/>
</dbReference>
<dbReference type="InterPro" id="IPR029099">
    <property type="entry name" value="Pribosyltran_N"/>
</dbReference>
<dbReference type="InterPro" id="IPR000836">
    <property type="entry name" value="PRibTrfase_dom"/>
</dbReference>
<dbReference type="InterPro" id="IPR029057">
    <property type="entry name" value="PRTase-like"/>
</dbReference>
<dbReference type="InterPro" id="IPR005946">
    <property type="entry name" value="Rib-P_diPkinase"/>
</dbReference>
<dbReference type="InterPro" id="IPR037515">
    <property type="entry name" value="Rib-P_diPkinase_bac"/>
</dbReference>
<dbReference type="NCBIfam" id="NF002320">
    <property type="entry name" value="PRK01259.1"/>
    <property type="match status" value="1"/>
</dbReference>
<dbReference type="NCBIfam" id="NF002758">
    <property type="entry name" value="PRK02812.1"/>
    <property type="match status" value="1"/>
</dbReference>
<dbReference type="NCBIfam" id="TIGR01251">
    <property type="entry name" value="ribP_PPkin"/>
    <property type="match status" value="1"/>
</dbReference>
<dbReference type="PANTHER" id="PTHR10210">
    <property type="entry name" value="RIBOSE-PHOSPHATE DIPHOSPHOKINASE FAMILY MEMBER"/>
    <property type="match status" value="1"/>
</dbReference>
<dbReference type="PANTHER" id="PTHR10210:SF41">
    <property type="entry name" value="RIBOSE-PHOSPHATE PYROPHOSPHOKINASE 1, CHLOROPLASTIC"/>
    <property type="match status" value="1"/>
</dbReference>
<dbReference type="Pfam" id="PF14572">
    <property type="entry name" value="Pribosyl_synth"/>
    <property type="match status" value="1"/>
</dbReference>
<dbReference type="Pfam" id="PF13793">
    <property type="entry name" value="Pribosyltran_N"/>
    <property type="match status" value="1"/>
</dbReference>
<dbReference type="SMART" id="SM01400">
    <property type="entry name" value="Pribosyltran_N"/>
    <property type="match status" value="1"/>
</dbReference>
<dbReference type="SUPFAM" id="SSF53271">
    <property type="entry name" value="PRTase-like"/>
    <property type="match status" value="1"/>
</dbReference>
<dbReference type="PROSITE" id="PS00114">
    <property type="entry name" value="PRPP_SYNTHASE"/>
    <property type="match status" value="1"/>
</dbReference>
<gene>
    <name evidence="1" type="primary">prs</name>
    <name type="synonym">prsA</name>
    <name type="ordered locus">Synpcc7942_2113</name>
</gene>
<protein>
    <recommendedName>
        <fullName evidence="1">Ribose-phosphate pyrophosphokinase</fullName>
        <shortName evidence="1">RPPK</shortName>
        <ecNumber evidence="1">2.7.6.1</ecNumber>
    </recommendedName>
    <alternativeName>
        <fullName evidence="1">5-phospho-D-ribosyl alpha-1-diphosphate synthase</fullName>
    </alternativeName>
    <alternativeName>
        <fullName evidence="1">Phosphoribosyl diphosphate synthase</fullName>
    </alternativeName>
    <alternativeName>
        <fullName evidence="1">Phosphoribosyl pyrophosphate synthase</fullName>
        <shortName evidence="1">P-Rib-PP synthase</shortName>
        <shortName evidence="1">PRPP synthase</shortName>
        <shortName evidence="1">PRPPase</shortName>
    </alternativeName>
</protein>
<proteinExistence type="inferred from homology"/>
<organism>
    <name type="scientific">Synechococcus elongatus (strain ATCC 33912 / PCC 7942 / FACHB-805)</name>
    <name type="common">Anacystis nidulans R2</name>
    <dbReference type="NCBI Taxonomy" id="1140"/>
    <lineage>
        <taxon>Bacteria</taxon>
        <taxon>Bacillati</taxon>
        <taxon>Cyanobacteriota</taxon>
        <taxon>Cyanophyceae</taxon>
        <taxon>Synechococcales</taxon>
        <taxon>Synechococcaceae</taxon>
        <taxon>Synechococcus</taxon>
    </lineage>
</organism>
<evidence type="ECO:0000255" key="1">
    <source>
        <dbReference type="HAMAP-Rule" id="MF_00583"/>
    </source>
</evidence>